<feature type="chain" id="PRO_0000092692" description="Phosphonates import ATP-binding protein PhnC 1">
    <location>
        <begin position="1"/>
        <end position="257"/>
    </location>
</feature>
<feature type="domain" description="ABC transporter" evidence="1">
    <location>
        <begin position="2"/>
        <end position="246"/>
    </location>
</feature>
<feature type="binding site" evidence="1">
    <location>
        <begin position="35"/>
        <end position="42"/>
    </location>
    <ligand>
        <name>ATP</name>
        <dbReference type="ChEBI" id="CHEBI:30616"/>
    </ligand>
</feature>
<name>PHNC1_HALH5</name>
<reference key="1">
    <citation type="journal article" date="2000" name="Nucleic Acids Res.">
        <title>Complete genome sequence of the alkaliphilic bacterium Bacillus halodurans and genomic sequence comparison with Bacillus subtilis.</title>
        <authorList>
            <person name="Takami H."/>
            <person name="Nakasone K."/>
            <person name="Takaki Y."/>
            <person name="Maeno G."/>
            <person name="Sasaki R."/>
            <person name="Masui N."/>
            <person name="Fuji F."/>
            <person name="Hirama C."/>
            <person name="Nakamura Y."/>
            <person name="Ogasawara N."/>
            <person name="Kuhara S."/>
            <person name="Horikoshi K."/>
        </authorList>
    </citation>
    <scope>NUCLEOTIDE SEQUENCE [LARGE SCALE GENOMIC DNA]</scope>
    <source>
        <strain>ATCC BAA-125 / DSM 18197 / FERM 7344 / JCM 9153 / C-125</strain>
    </source>
</reference>
<gene>
    <name evidence="1" type="primary">phnC1</name>
    <name type="ordered locus">BH0440</name>
</gene>
<proteinExistence type="inferred from homology"/>
<organism>
    <name type="scientific">Halalkalibacterium halodurans (strain ATCC BAA-125 / DSM 18197 / FERM 7344 / JCM 9153 / C-125)</name>
    <name type="common">Bacillus halodurans</name>
    <dbReference type="NCBI Taxonomy" id="272558"/>
    <lineage>
        <taxon>Bacteria</taxon>
        <taxon>Bacillati</taxon>
        <taxon>Bacillota</taxon>
        <taxon>Bacilli</taxon>
        <taxon>Bacillales</taxon>
        <taxon>Bacillaceae</taxon>
        <taxon>Halalkalibacterium (ex Joshi et al. 2022)</taxon>
    </lineage>
</organism>
<sequence length="257" mass="28669">MIELKNVSKVYPNGVIGLDNINLTIEKGEFVAIVGLSGAGKSTLLRAMNRLIDISDGDIMINRRSITSASGKELRMMRRDIGMIFQNFNLVKRSTVLRNVLSGRVAHNHTFRTLFNLFPQKDVDLALQSLERVNILEKAYTRSSQLSGGQQQRVSIARALAQEAKMILADEPTASLDPVTTKQVMDDLKKINTEDQVTVVINLHFVDLAREYATRIIGLRDGKVVFDGPAQRATDEVFKDIYGRPLKEDELLGKEVG</sequence>
<dbReference type="EC" id="7.3.2.2" evidence="1"/>
<dbReference type="EMBL" id="BA000004">
    <property type="protein sequence ID" value="BAB04159.1"/>
    <property type="molecule type" value="Genomic_DNA"/>
</dbReference>
<dbReference type="PIR" id="H83704">
    <property type="entry name" value="H83704"/>
</dbReference>
<dbReference type="RefSeq" id="WP_010896618.1">
    <property type="nucleotide sequence ID" value="NC_002570.2"/>
</dbReference>
<dbReference type="SMR" id="Q9KFN9"/>
<dbReference type="STRING" id="272558.gene:10726293"/>
<dbReference type="GeneID" id="87596004"/>
<dbReference type="KEGG" id="bha:BH0440"/>
<dbReference type="eggNOG" id="COG3638">
    <property type="taxonomic scope" value="Bacteria"/>
</dbReference>
<dbReference type="HOGENOM" id="CLU_000604_1_22_9"/>
<dbReference type="OrthoDB" id="9802264at2"/>
<dbReference type="Proteomes" id="UP000001258">
    <property type="component" value="Chromosome"/>
</dbReference>
<dbReference type="GO" id="GO:0005886">
    <property type="term" value="C:plasma membrane"/>
    <property type="evidence" value="ECO:0007669"/>
    <property type="project" value="UniProtKB-SubCell"/>
</dbReference>
<dbReference type="GO" id="GO:0015416">
    <property type="term" value="F:ABC-type phosphonate transporter activity"/>
    <property type="evidence" value="ECO:0007669"/>
    <property type="project" value="UniProtKB-EC"/>
</dbReference>
<dbReference type="GO" id="GO:0005524">
    <property type="term" value="F:ATP binding"/>
    <property type="evidence" value="ECO:0007669"/>
    <property type="project" value="UniProtKB-KW"/>
</dbReference>
<dbReference type="GO" id="GO:0016887">
    <property type="term" value="F:ATP hydrolysis activity"/>
    <property type="evidence" value="ECO:0007669"/>
    <property type="project" value="InterPro"/>
</dbReference>
<dbReference type="CDD" id="cd03256">
    <property type="entry name" value="ABC_PhnC_transporter"/>
    <property type="match status" value="1"/>
</dbReference>
<dbReference type="Gene3D" id="3.40.50.300">
    <property type="entry name" value="P-loop containing nucleotide triphosphate hydrolases"/>
    <property type="match status" value="1"/>
</dbReference>
<dbReference type="InterPro" id="IPR003593">
    <property type="entry name" value="AAA+_ATPase"/>
</dbReference>
<dbReference type="InterPro" id="IPR003439">
    <property type="entry name" value="ABC_transporter-like_ATP-bd"/>
</dbReference>
<dbReference type="InterPro" id="IPR017871">
    <property type="entry name" value="ABC_transporter-like_CS"/>
</dbReference>
<dbReference type="InterPro" id="IPR012693">
    <property type="entry name" value="ABC_transpr_PhnC"/>
</dbReference>
<dbReference type="InterPro" id="IPR050086">
    <property type="entry name" value="MetN_ABC_transporter-like"/>
</dbReference>
<dbReference type="InterPro" id="IPR027417">
    <property type="entry name" value="P-loop_NTPase"/>
</dbReference>
<dbReference type="NCBIfam" id="TIGR02315">
    <property type="entry name" value="ABC_phnC"/>
    <property type="match status" value="1"/>
</dbReference>
<dbReference type="PANTHER" id="PTHR43166">
    <property type="entry name" value="AMINO ACID IMPORT ATP-BINDING PROTEIN"/>
    <property type="match status" value="1"/>
</dbReference>
<dbReference type="PANTHER" id="PTHR43166:SF6">
    <property type="entry name" value="PHOSPHONATES IMPORT ATP-BINDING PROTEIN PHNC"/>
    <property type="match status" value="1"/>
</dbReference>
<dbReference type="Pfam" id="PF00005">
    <property type="entry name" value="ABC_tran"/>
    <property type="match status" value="1"/>
</dbReference>
<dbReference type="SMART" id="SM00382">
    <property type="entry name" value="AAA"/>
    <property type="match status" value="1"/>
</dbReference>
<dbReference type="SUPFAM" id="SSF52540">
    <property type="entry name" value="P-loop containing nucleoside triphosphate hydrolases"/>
    <property type="match status" value="1"/>
</dbReference>
<dbReference type="PROSITE" id="PS00211">
    <property type="entry name" value="ABC_TRANSPORTER_1"/>
    <property type="match status" value="1"/>
</dbReference>
<dbReference type="PROSITE" id="PS50893">
    <property type="entry name" value="ABC_TRANSPORTER_2"/>
    <property type="match status" value="1"/>
</dbReference>
<dbReference type="PROSITE" id="PS51249">
    <property type="entry name" value="PHNC"/>
    <property type="match status" value="1"/>
</dbReference>
<comment type="function">
    <text evidence="1">Part of the ABC transporter complex PhnCDE involved in phosphonates import. Responsible for energy coupling to the transport system.</text>
</comment>
<comment type="catalytic activity">
    <reaction evidence="1">
        <text>phosphonate(out) + ATP + H2O = phosphonate(in) + ADP + phosphate + H(+)</text>
        <dbReference type="Rhea" id="RHEA:18065"/>
        <dbReference type="ChEBI" id="CHEBI:15377"/>
        <dbReference type="ChEBI" id="CHEBI:15378"/>
        <dbReference type="ChEBI" id="CHEBI:16215"/>
        <dbReference type="ChEBI" id="CHEBI:30616"/>
        <dbReference type="ChEBI" id="CHEBI:43474"/>
        <dbReference type="ChEBI" id="CHEBI:456216"/>
        <dbReference type="EC" id="7.3.2.2"/>
    </reaction>
</comment>
<comment type="subunit">
    <text evidence="1">The complex is composed of two ATP-binding proteins (PhnC), two transmembrane proteins (PhnE) and a solute-binding protein (PhnD).</text>
</comment>
<comment type="subcellular location">
    <subcellularLocation>
        <location evidence="1">Cell membrane</location>
        <topology evidence="1">Peripheral membrane protein</topology>
    </subcellularLocation>
</comment>
<comment type="similarity">
    <text evidence="1">Belongs to the ABC transporter superfamily. Phosphonates importer (TC 3.A.1.9.1) family.</text>
</comment>
<keyword id="KW-0067">ATP-binding</keyword>
<keyword id="KW-1003">Cell membrane</keyword>
<keyword id="KW-0472">Membrane</keyword>
<keyword id="KW-0547">Nucleotide-binding</keyword>
<keyword id="KW-0918">Phosphonate transport</keyword>
<keyword id="KW-1185">Reference proteome</keyword>
<keyword id="KW-1278">Translocase</keyword>
<keyword id="KW-0813">Transport</keyword>
<evidence type="ECO:0000255" key="1">
    <source>
        <dbReference type="HAMAP-Rule" id="MF_01713"/>
    </source>
</evidence>
<accession>Q9KFN9</accession>
<protein>
    <recommendedName>
        <fullName evidence="1">Phosphonates import ATP-binding protein PhnC 1</fullName>
        <ecNumber evidence="1">7.3.2.2</ecNumber>
    </recommendedName>
</protein>